<keyword id="KW-0150">Chloroplast</keyword>
<keyword id="KW-0249">Electron transport</keyword>
<keyword id="KW-0472">Membrane</keyword>
<keyword id="KW-0602">Photosynthesis</keyword>
<keyword id="KW-0934">Plastid</keyword>
<keyword id="KW-0793">Thylakoid</keyword>
<keyword id="KW-0812">Transmembrane</keyword>
<keyword id="KW-1133">Transmembrane helix</keyword>
<keyword id="KW-0813">Transport</keyword>
<sequence>MDIVSLAWAALMVVFTFSLSLVVWGRSGL</sequence>
<feature type="chain" id="PRO_0000217122" description="Cytochrome b6-f complex subunit 8">
    <location>
        <begin position="1"/>
        <end position="29"/>
    </location>
</feature>
<feature type="transmembrane region" description="Helical" evidence="1">
    <location>
        <begin position="3"/>
        <end position="23"/>
    </location>
</feature>
<dbReference type="EMBL" id="AY275926">
    <property type="protein sequence ID" value="AAP34503.1"/>
    <property type="molecule type" value="Genomic_DNA"/>
</dbReference>
<dbReference type="EMBL" id="AY582139">
    <property type="protein sequence ID" value="AAT98502.1"/>
    <property type="molecule type" value="Genomic_DNA"/>
</dbReference>
<dbReference type="RefSeq" id="YP_086959.1">
    <property type="nucleotide sequence ID" value="NC_006290.1"/>
</dbReference>
<dbReference type="SMR" id="Q7GQE8"/>
<dbReference type="GeneID" id="3021457"/>
<dbReference type="GO" id="GO:0009535">
    <property type="term" value="C:chloroplast thylakoid membrane"/>
    <property type="evidence" value="ECO:0007669"/>
    <property type="project" value="UniProtKB-SubCell"/>
</dbReference>
<dbReference type="GO" id="GO:0009512">
    <property type="term" value="C:cytochrome b6f complex"/>
    <property type="evidence" value="ECO:0007669"/>
    <property type="project" value="InterPro"/>
</dbReference>
<dbReference type="GO" id="GO:0045158">
    <property type="term" value="F:electron transporter, transferring electrons within cytochrome b6/f complex of photosystem II activity"/>
    <property type="evidence" value="ECO:0007669"/>
    <property type="project" value="InterPro"/>
</dbReference>
<dbReference type="GO" id="GO:0017004">
    <property type="term" value="P:cytochrome complex assembly"/>
    <property type="evidence" value="ECO:0007669"/>
    <property type="project" value="UniProtKB-UniRule"/>
</dbReference>
<dbReference type="GO" id="GO:0015979">
    <property type="term" value="P:photosynthesis"/>
    <property type="evidence" value="ECO:0007669"/>
    <property type="project" value="UniProtKB-KW"/>
</dbReference>
<dbReference type="HAMAP" id="MF_00395">
    <property type="entry name" value="Cytb6_f_PetN"/>
    <property type="match status" value="1"/>
</dbReference>
<dbReference type="InterPro" id="IPR036143">
    <property type="entry name" value="Cytochr_b6-f_cplx_su8_sf"/>
</dbReference>
<dbReference type="InterPro" id="IPR005497">
    <property type="entry name" value="Cytochrome_b6-f_cplx_su8"/>
</dbReference>
<dbReference type="Pfam" id="PF03742">
    <property type="entry name" value="PetN"/>
    <property type="match status" value="1"/>
</dbReference>
<dbReference type="SUPFAM" id="SSF103451">
    <property type="entry name" value="PetN subunit of the cytochrome b6f complex"/>
    <property type="match status" value="1"/>
</dbReference>
<proteinExistence type="inferred from homology"/>
<gene>
    <name evidence="1" type="primary">petN</name>
    <name type="ORF">PSC0299</name>
</gene>
<accession>Q7GQE8</accession>
<organism>
    <name type="scientific">Panax ginseng</name>
    <name type="common">Korean ginseng</name>
    <dbReference type="NCBI Taxonomy" id="4054"/>
    <lineage>
        <taxon>Eukaryota</taxon>
        <taxon>Viridiplantae</taxon>
        <taxon>Streptophyta</taxon>
        <taxon>Embryophyta</taxon>
        <taxon>Tracheophyta</taxon>
        <taxon>Spermatophyta</taxon>
        <taxon>Magnoliopsida</taxon>
        <taxon>eudicotyledons</taxon>
        <taxon>Gunneridae</taxon>
        <taxon>Pentapetalae</taxon>
        <taxon>asterids</taxon>
        <taxon>campanulids</taxon>
        <taxon>Apiales</taxon>
        <taxon>Araliaceae</taxon>
        <taxon>Panax</taxon>
    </lineage>
</organism>
<evidence type="ECO:0000255" key="1">
    <source>
        <dbReference type="HAMAP-Rule" id="MF_00395"/>
    </source>
</evidence>
<name>PETN_PANGI</name>
<reference key="1">
    <citation type="journal article" date="2004" name="Mol. Phylogenet. Evol.">
        <title>Phylogeny of Panax using chloroplast trnC-trnD intergenic region and the utility of trnC-trnD in interspecific studies of plants.</title>
        <authorList>
            <person name="Lee C."/>
            <person name="Wen J."/>
        </authorList>
    </citation>
    <scope>NUCLEOTIDE SEQUENCE [GENOMIC DNA]</scope>
</reference>
<reference key="2">
    <citation type="journal article" date="2004" name="DNA Res.">
        <title>Complete chloroplast genome sequence from Korea ginseng (Panax schinseng Nees) and comparative analysis of sequence evolution among 17 vascular plants.</title>
        <authorList>
            <person name="Kim K.-J."/>
            <person name="Lee H.-L."/>
        </authorList>
    </citation>
    <scope>NUCLEOTIDE SEQUENCE [LARGE SCALE GENOMIC DNA]</scope>
</reference>
<geneLocation type="chloroplast"/>
<protein>
    <recommendedName>
        <fullName evidence="1">Cytochrome b6-f complex subunit 8</fullName>
    </recommendedName>
    <alternativeName>
        <fullName evidence="1">Cytochrome b6-f complex subunit PetN</fullName>
    </alternativeName>
    <alternativeName>
        <fullName evidence="1">Cytochrome b6-f complex subunit VIII</fullName>
    </alternativeName>
</protein>
<comment type="function">
    <text evidence="1">Component of the cytochrome b6-f complex, which mediates electron transfer between photosystem II (PSII) and photosystem I (PSI), cyclic electron flow around PSI, and state transitions.</text>
</comment>
<comment type="subunit">
    <text evidence="1">The 4 large subunits of the cytochrome b6-f complex are cytochrome b6, subunit IV (17 kDa polypeptide, PetD), cytochrome f and the Rieske protein, while the 4 small subunits are PetG, PetL, PetM and PetN. The complex functions as a dimer.</text>
</comment>
<comment type="subcellular location">
    <subcellularLocation>
        <location evidence="1">Plastid</location>
        <location evidence="1">Chloroplast thylakoid membrane</location>
        <topology evidence="1">Single-pass membrane protein</topology>
    </subcellularLocation>
</comment>
<comment type="similarity">
    <text evidence="1">Belongs to the PetN family.</text>
</comment>